<protein>
    <recommendedName>
        <fullName evidence="2">Soluble pyridine nucleotide transhydrogenase</fullName>
        <shortName evidence="2">STH</shortName>
        <ecNumber evidence="2">1.6.1.1</ecNumber>
    </recommendedName>
    <alternativeName>
        <fullName evidence="2">NAD(P)(+) transhydrogenase [B-specific]</fullName>
    </alternativeName>
</protein>
<sequence length="466" mass="51545">MPHSYDYDAIVIGSGPGGEGAAMGLVKQGARVAVIERYQNVGGGCTHWGTIPSKALRHAVSRIIEFNQNPLYSDHSRLLRSSFADILNHADNVINQQTRMRQGFYERNHCEILQGNARFVDEHTLALDCPDGSVETLTAEKFVIACGSRPYHPTDVDFTHPRIYDSDSILSMHHEPRHVLIYGAGVIGCEYASIFRGMDVKVDLINTRDRLLAFLDQEMSDSLSYHFWNSGVVIRHNEEYEKIEGCDDGVIMHLKSGKKLKADCLLYANGRTGNTDSLALQNIGLETDSRGQLKVNSMYQTAQPHVYAVGDVIGYPSLASAAYDQGRIAAQALVKGEATAHLIEDIPTGIYTIPEISSVGKTEQLLTAMKVPYEVGRAQFKHLARAQIVGMNVGTLKILFHRETKEILGIHCFGERAAEIIHIGQAIMEQKGGGNTIEYFVNTTFNYPTMAEAYRVAALNGLNRLF</sequence>
<gene>
    <name evidence="2" type="primary">sthA</name>
    <name evidence="2" type="synonym">udhA</name>
    <name type="ordered locus">Z5521</name>
    <name type="ordered locus">ECs4891</name>
</gene>
<dbReference type="EC" id="1.6.1.1" evidence="2"/>
<dbReference type="EMBL" id="AE005174">
    <property type="protein sequence ID" value="AAG59164.1"/>
    <property type="status" value="ALT_INIT"/>
    <property type="molecule type" value="Genomic_DNA"/>
</dbReference>
<dbReference type="EMBL" id="BA000007">
    <property type="protein sequence ID" value="BAB38314.2"/>
    <property type="molecule type" value="Genomic_DNA"/>
</dbReference>
<dbReference type="PIR" id="C91240">
    <property type="entry name" value="C91240"/>
</dbReference>
<dbReference type="PIR" id="H86087">
    <property type="entry name" value="H86087"/>
</dbReference>
<dbReference type="RefSeq" id="NP_312918.2">
    <property type="nucleotide sequence ID" value="NC_002695.1"/>
</dbReference>
<dbReference type="RefSeq" id="WP_001120807.1">
    <property type="nucleotide sequence ID" value="NZ_SDVX01000004.1"/>
</dbReference>
<dbReference type="SMR" id="Q8X727"/>
<dbReference type="STRING" id="155864.Z5521"/>
<dbReference type="GeneID" id="914986"/>
<dbReference type="KEGG" id="ece:Z5521"/>
<dbReference type="KEGG" id="ecs:ECs_4891"/>
<dbReference type="PATRIC" id="fig|386585.9.peg.5115"/>
<dbReference type="eggNOG" id="COG1249">
    <property type="taxonomic scope" value="Bacteria"/>
</dbReference>
<dbReference type="HOGENOM" id="CLU_016755_0_0_6"/>
<dbReference type="Proteomes" id="UP000000558">
    <property type="component" value="Chromosome"/>
</dbReference>
<dbReference type="Proteomes" id="UP000002519">
    <property type="component" value="Chromosome"/>
</dbReference>
<dbReference type="GO" id="GO:0005829">
    <property type="term" value="C:cytosol"/>
    <property type="evidence" value="ECO:0007669"/>
    <property type="project" value="TreeGrafter"/>
</dbReference>
<dbReference type="GO" id="GO:0004148">
    <property type="term" value="F:dihydrolipoyl dehydrogenase (NADH) activity"/>
    <property type="evidence" value="ECO:0007669"/>
    <property type="project" value="TreeGrafter"/>
</dbReference>
<dbReference type="GO" id="GO:0050660">
    <property type="term" value="F:flavin adenine dinucleotide binding"/>
    <property type="evidence" value="ECO:0007669"/>
    <property type="project" value="TreeGrafter"/>
</dbReference>
<dbReference type="GO" id="GO:0003957">
    <property type="term" value="F:NAD(P)+ transhydrogenase (Si-specific) activity"/>
    <property type="evidence" value="ECO:0007669"/>
    <property type="project" value="UniProtKB-UniRule"/>
</dbReference>
<dbReference type="GO" id="GO:0006103">
    <property type="term" value="P:2-oxoglutarate metabolic process"/>
    <property type="evidence" value="ECO:0007669"/>
    <property type="project" value="TreeGrafter"/>
</dbReference>
<dbReference type="GO" id="GO:0006739">
    <property type="term" value="P:NADP metabolic process"/>
    <property type="evidence" value="ECO:0007669"/>
    <property type="project" value="UniProtKB-UniRule"/>
</dbReference>
<dbReference type="FunFam" id="3.30.390.30:FF:000002">
    <property type="entry name" value="Soluble pyridine nucleotide transhydrogenase"/>
    <property type="match status" value="1"/>
</dbReference>
<dbReference type="FunFam" id="3.50.50.60:FF:000008">
    <property type="entry name" value="Soluble pyridine nucleotide transhydrogenase"/>
    <property type="match status" value="1"/>
</dbReference>
<dbReference type="Gene3D" id="3.30.390.30">
    <property type="match status" value="1"/>
</dbReference>
<dbReference type="Gene3D" id="3.50.50.60">
    <property type="entry name" value="FAD/NAD(P)-binding domain"/>
    <property type="match status" value="2"/>
</dbReference>
<dbReference type="HAMAP" id="MF_00247">
    <property type="entry name" value="SthA"/>
    <property type="match status" value="1"/>
</dbReference>
<dbReference type="InterPro" id="IPR050151">
    <property type="entry name" value="Class-I_Pyr_Nuc-Dis_Oxidored"/>
</dbReference>
<dbReference type="InterPro" id="IPR036188">
    <property type="entry name" value="FAD/NAD-bd_sf"/>
</dbReference>
<dbReference type="InterPro" id="IPR023753">
    <property type="entry name" value="FAD/NAD-binding_dom"/>
</dbReference>
<dbReference type="InterPro" id="IPR016156">
    <property type="entry name" value="FAD/NAD-linked_Rdtase_dimer_sf"/>
</dbReference>
<dbReference type="InterPro" id="IPR001100">
    <property type="entry name" value="Pyr_nuc-diS_OxRdtase"/>
</dbReference>
<dbReference type="InterPro" id="IPR004099">
    <property type="entry name" value="Pyr_nucl-diS_OxRdtase_dimer"/>
</dbReference>
<dbReference type="InterPro" id="IPR022962">
    <property type="entry name" value="STH_gammaproteobact"/>
</dbReference>
<dbReference type="NCBIfam" id="NF003585">
    <property type="entry name" value="PRK05249.1"/>
    <property type="match status" value="1"/>
</dbReference>
<dbReference type="PANTHER" id="PTHR22912">
    <property type="entry name" value="DISULFIDE OXIDOREDUCTASE"/>
    <property type="match status" value="1"/>
</dbReference>
<dbReference type="PANTHER" id="PTHR22912:SF93">
    <property type="entry name" value="SOLUBLE PYRIDINE NUCLEOTIDE TRANSHYDROGENASE"/>
    <property type="match status" value="1"/>
</dbReference>
<dbReference type="Pfam" id="PF07992">
    <property type="entry name" value="Pyr_redox_2"/>
    <property type="match status" value="1"/>
</dbReference>
<dbReference type="Pfam" id="PF02852">
    <property type="entry name" value="Pyr_redox_dim"/>
    <property type="match status" value="1"/>
</dbReference>
<dbReference type="PIRSF" id="PIRSF000350">
    <property type="entry name" value="Mercury_reductase_MerA"/>
    <property type="match status" value="1"/>
</dbReference>
<dbReference type="PRINTS" id="PR00368">
    <property type="entry name" value="FADPNR"/>
</dbReference>
<dbReference type="PRINTS" id="PR00411">
    <property type="entry name" value="PNDRDTASEI"/>
</dbReference>
<dbReference type="SUPFAM" id="SSF51905">
    <property type="entry name" value="FAD/NAD(P)-binding domain"/>
    <property type="match status" value="1"/>
</dbReference>
<dbReference type="SUPFAM" id="SSF55424">
    <property type="entry name" value="FAD/NAD-linked reductases, dimerisation (C-terminal) domain"/>
    <property type="match status" value="1"/>
</dbReference>
<reference key="1">
    <citation type="journal article" date="2001" name="Nature">
        <title>Genome sequence of enterohaemorrhagic Escherichia coli O157:H7.</title>
        <authorList>
            <person name="Perna N.T."/>
            <person name="Plunkett G. III"/>
            <person name="Burland V."/>
            <person name="Mau B."/>
            <person name="Glasner J.D."/>
            <person name="Rose D.J."/>
            <person name="Mayhew G.F."/>
            <person name="Evans P.S."/>
            <person name="Gregor J."/>
            <person name="Kirkpatrick H.A."/>
            <person name="Posfai G."/>
            <person name="Hackett J."/>
            <person name="Klink S."/>
            <person name="Boutin A."/>
            <person name="Shao Y."/>
            <person name="Miller L."/>
            <person name="Grotbeck E.J."/>
            <person name="Davis N.W."/>
            <person name="Lim A."/>
            <person name="Dimalanta E.T."/>
            <person name="Potamousis K."/>
            <person name="Apodaca J."/>
            <person name="Anantharaman T.S."/>
            <person name="Lin J."/>
            <person name="Yen G."/>
            <person name="Schwartz D.C."/>
            <person name="Welch R.A."/>
            <person name="Blattner F.R."/>
        </authorList>
    </citation>
    <scope>NUCLEOTIDE SEQUENCE [LARGE SCALE GENOMIC DNA]</scope>
    <source>
        <strain>O157:H7 / EDL933 / ATCC 700927 / EHEC</strain>
    </source>
</reference>
<reference key="2">
    <citation type="journal article" date="2001" name="DNA Res.">
        <title>Complete genome sequence of enterohemorrhagic Escherichia coli O157:H7 and genomic comparison with a laboratory strain K-12.</title>
        <authorList>
            <person name="Hayashi T."/>
            <person name="Makino K."/>
            <person name="Ohnishi M."/>
            <person name="Kurokawa K."/>
            <person name="Ishii K."/>
            <person name="Yokoyama K."/>
            <person name="Han C.-G."/>
            <person name="Ohtsubo E."/>
            <person name="Nakayama K."/>
            <person name="Murata T."/>
            <person name="Tanaka M."/>
            <person name="Tobe T."/>
            <person name="Iida T."/>
            <person name="Takami H."/>
            <person name="Honda T."/>
            <person name="Sasakawa C."/>
            <person name="Ogasawara N."/>
            <person name="Yasunaga T."/>
            <person name="Kuhara S."/>
            <person name="Shiba T."/>
            <person name="Hattori M."/>
            <person name="Shinagawa H."/>
        </authorList>
    </citation>
    <scope>NUCLEOTIDE SEQUENCE [LARGE SCALE GENOMIC DNA]</scope>
    <source>
        <strain>O157:H7 / Sakai / RIMD 0509952 / EHEC</strain>
    </source>
</reference>
<proteinExistence type="inferred from homology"/>
<keyword id="KW-0963">Cytoplasm</keyword>
<keyword id="KW-0274">FAD</keyword>
<keyword id="KW-0285">Flavoprotein</keyword>
<keyword id="KW-0520">NAD</keyword>
<keyword id="KW-0521">NADP</keyword>
<keyword id="KW-0560">Oxidoreductase</keyword>
<keyword id="KW-1185">Reference proteome</keyword>
<accession>Q8X727</accession>
<evidence type="ECO:0000250" key="1"/>
<evidence type="ECO:0000255" key="2">
    <source>
        <dbReference type="HAMAP-Rule" id="MF_00247"/>
    </source>
</evidence>
<evidence type="ECO:0000305" key="3"/>
<name>STHA_ECO57</name>
<comment type="function">
    <text evidence="2">Conversion of NADPH, generated by peripheral catabolic pathways, to NADH, which can enter the respiratory chain for energy generation.</text>
</comment>
<comment type="catalytic activity">
    <reaction evidence="2">
        <text>NAD(+) + NADPH = NADH + NADP(+)</text>
        <dbReference type="Rhea" id="RHEA:11692"/>
        <dbReference type="ChEBI" id="CHEBI:57540"/>
        <dbReference type="ChEBI" id="CHEBI:57783"/>
        <dbReference type="ChEBI" id="CHEBI:57945"/>
        <dbReference type="ChEBI" id="CHEBI:58349"/>
        <dbReference type="EC" id="1.6.1.1"/>
    </reaction>
</comment>
<comment type="cofactor">
    <cofactor evidence="2">
        <name>FAD</name>
        <dbReference type="ChEBI" id="CHEBI:57692"/>
    </cofactor>
    <text evidence="2">Binds 1 FAD per subunit.</text>
</comment>
<comment type="subunit">
    <text evidence="1">Homooligomer; probable homooctamer.</text>
</comment>
<comment type="subcellular location">
    <subcellularLocation>
        <location evidence="2">Cytoplasm</location>
    </subcellularLocation>
</comment>
<comment type="similarity">
    <text evidence="2">Belongs to the class-I pyridine nucleotide-disulfide oxidoreductase family.</text>
</comment>
<comment type="sequence caution" evidence="3">
    <conflict type="erroneous initiation">
        <sequence resource="EMBL-CDS" id="AAG59164"/>
    </conflict>
    <text>Truncated N-terminus.</text>
</comment>
<organism>
    <name type="scientific">Escherichia coli O157:H7</name>
    <dbReference type="NCBI Taxonomy" id="83334"/>
    <lineage>
        <taxon>Bacteria</taxon>
        <taxon>Pseudomonadati</taxon>
        <taxon>Pseudomonadota</taxon>
        <taxon>Gammaproteobacteria</taxon>
        <taxon>Enterobacterales</taxon>
        <taxon>Enterobacteriaceae</taxon>
        <taxon>Escherichia</taxon>
    </lineage>
</organism>
<feature type="initiator methionine" description="Removed" evidence="1">
    <location>
        <position position="1"/>
    </location>
</feature>
<feature type="chain" id="PRO_0000068063" description="Soluble pyridine nucleotide transhydrogenase">
    <location>
        <begin position="2"/>
        <end position="466"/>
    </location>
</feature>
<feature type="binding site" evidence="2">
    <location>
        <begin position="36"/>
        <end position="45"/>
    </location>
    <ligand>
        <name>FAD</name>
        <dbReference type="ChEBI" id="CHEBI:57692"/>
    </ligand>
</feature>